<sequence length="410" mass="45524">MSAKKPVKKVVLAYSGGLDTSVILKWLQDAYDAEVVTFTADLGQGEELEPARRKAEAAGVSEIFIEDLREEFVRDFVYPMVRANAVYEGLYLLGTSIARPLIAKRLVEIAHATGADAVAHGATGKGNDQVRFELGVYALDPDLRVIAPWREWDLNSRTKLIAYAEENGIEVAKDKRGEAPFSVDANLWHTSSEGKILEDPAEEAADIVYQRTDAPEAAPDKPEYVTIAFEAGDAVAVNGEAMSPATLLTRLNALGRVHGVGRLDLVENRFVGMKSRGIYETPGGTILMAAHRGIEQITLDRGACHLKDELMPRYAKLLYEGFWFSPEREMLQAAIDHSQKDVTGEVRLKLYKGSVNVVGRSSEHSLYSLEHVTFEEDIVYDQKDAEGFIRLNALRLQLLARRKRRLGHNE</sequence>
<protein>
    <recommendedName>
        <fullName evidence="1">Argininosuccinate synthase</fullName>
        <ecNumber evidence="1">6.3.4.5</ecNumber>
    </recommendedName>
    <alternativeName>
        <fullName evidence="1">Citrulline--aspartate ligase</fullName>
    </alternativeName>
</protein>
<comment type="catalytic activity">
    <reaction evidence="1">
        <text>L-citrulline + L-aspartate + ATP = 2-(N(omega)-L-arginino)succinate + AMP + diphosphate + H(+)</text>
        <dbReference type="Rhea" id="RHEA:10932"/>
        <dbReference type="ChEBI" id="CHEBI:15378"/>
        <dbReference type="ChEBI" id="CHEBI:29991"/>
        <dbReference type="ChEBI" id="CHEBI:30616"/>
        <dbReference type="ChEBI" id="CHEBI:33019"/>
        <dbReference type="ChEBI" id="CHEBI:57472"/>
        <dbReference type="ChEBI" id="CHEBI:57743"/>
        <dbReference type="ChEBI" id="CHEBI:456215"/>
        <dbReference type="EC" id="6.3.4.5"/>
    </reaction>
</comment>
<comment type="pathway">
    <text evidence="1">Amino-acid biosynthesis; L-arginine biosynthesis; L-arginine from L-ornithine and carbamoyl phosphate: step 2/3.</text>
</comment>
<comment type="subunit">
    <text evidence="1">Homotetramer.</text>
</comment>
<comment type="subcellular location">
    <subcellularLocation>
        <location evidence="1">Cytoplasm</location>
    </subcellularLocation>
</comment>
<comment type="similarity">
    <text evidence="1">Belongs to the argininosuccinate synthase family. Type 1 subfamily.</text>
</comment>
<feature type="chain" id="PRO_0000263937" description="Argininosuccinate synthase">
    <location>
        <begin position="1"/>
        <end position="410"/>
    </location>
</feature>
<feature type="binding site" evidence="1">
    <location>
        <begin position="13"/>
        <end position="21"/>
    </location>
    <ligand>
        <name>ATP</name>
        <dbReference type="ChEBI" id="CHEBI:30616"/>
    </ligand>
</feature>
<feature type="binding site" evidence="1">
    <location>
        <position position="40"/>
    </location>
    <ligand>
        <name>ATP</name>
        <dbReference type="ChEBI" id="CHEBI:30616"/>
    </ligand>
</feature>
<feature type="binding site" evidence="1">
    <location>
        <position position="91"/>
    </location>
    <ligand>
        <name>L-citrulline</name>
        <dbReference type="ChEBI" id="CHEBI:57743"/>
    </ligand>
</feature>
<feature type="binding site" evidence="1">
    <location>
        <position position="96"/>
    </location>
    <ligand>
        <name>L-citrulline</name>
        <dbReference type="ChEBI" id="CHEBI:57743"/>
    </ligand>
</feature>
<feature type="binding site" evidence="1">
    <location>
        <position position="121"/>
    </location>
    <ligand>
        <name>ATP</name>
        <dbReference type="ChEBI" id="CHEBI:30616"/>
    </ligand>
</feature>
<feature type="binding site" evidence="1">
    <location>
        <position position="123"/>
    </location>
    <ligand>
        <name>L-aspartate</name>
        <dbReference type="ChEBI" id="CHEBI:29991"/>
    </ligand>
</feature>
<feature type="binding site" evidence="1">
    <location>
        <position position="127"/>
    </location>
    <ligand>
        <name>L-aspartate</name>
        <dbReference type="ChEBI" id="CHEBI:29991"/>
    </ligand>
</feature>
<feature type="binding site" evidence="1">
    <location>
        <position position="127"/>
    </location>
    <ligand>
        <name>L-citrulline</name>
        <dbReference type="ChEBI" id="CHEBI:57743"/>
    </ligand>
</feature>
<feature type="binding site" evidence="1">
    <location>
        <position position="128"/>
    </location>
    <ligand>
        <name>L-aspartate</name>
        <dbReference type="ChEBI" id="CHEBI:29991"/>
    </ligand>
</feature>
<feature type="binding site" evidence="1">
    <location>
        <position position="131"/>
    </location>
    <ligand>
        <name>L-citrulline</name>
        <dbReference type="ChEBI" id="CHEBI:57743"/>
    </ligand>
</feature>
<feature type="binding site" evidence="1">
    <location>
        <position position="182"/>
    </location>
    <ligand>
        <name>L-citrulline</name>
        <dbReference type="ChEBI" id="CHEBI:57743"/>
    </ligand>
</feature>
<feature type="binding site" evidence="1">
    <location>
        <position position="191"/>
    </location>
    <ligand>
        <name>L-citrulline</name>
        <dbReference type="ChEBI" id="CHEBI:57743"/>
    </ligand>
</feature>
<feature type="binding site" evidence="1">
    <location>
        <position position="267"/>
    </location>
    <ligand>
        <name>L-citrulline</name>
        <dbReference type="ChEBI" id="CHEBI:57743"/>
    </ligand>
</feature>
<feature type="binding site" evidence="1">
    <location>
        <position position="279"/>
    </location>
    <ligand>
        <name>L-citrulline</name>
        <dbReference type="ChEBI" id="CHEBI:57743"/>
    </ligand>
</feature>
<reference key="1">
    <citation type="submission" date="2006-08" db="EMBL/GenBank/DDBJ databases">
        <title>Complete sequence of Maricaulis maris MCS10.</title>
        <authorList>
            <consortium name="US DOE Joint Genome Institute"/>
            <person name="Copeland A."/>
            <person name="Lucas S."/>
            <person name="Lapidus A."/>
            <person name="Barry K."/>
            <person name="Detter J.C."/>
            <person name="Glavina del Rio T."/>
            <person name="Hammon N."/>
            <person name="Israni S."/>
            <person name="Dalin E."/>
            <person name="Tice H."/>
            <person name="Pitluck S."/>
            <person name="Saunders E."/>
            <person name="Brettin T."/>
            <person name="Bruce D."/>
            <person name="Han C."/>
            <person name="Tapia R."/>
            <person name="Gilna P."/>
            <person name="Schmutz J."/>
            <person name="Larimer F."/>
            <person name="Land M."/>
            <person name="Hauser L."/>
            <person name="Kyrpides N."/>
            <person name="Mikhailova N."/>
            <person name="Viollier P."/>
            <person name="Stephens C."/>
            <person name="Richardson P."/>
        </authorList>
    </citation>
    <scope>NUCLEOTIDE SEQUENCE [LARGE SCALE GENOMIC DNA]</scope>
    <source>
        <strain>MCS10</strain>
    </source>
</reference>
<proteinExistence type="inferred from homology"/>
<accession>Q0AKJ6</accession>
<keyword id="KW-0028">Amino-acid biosynthesis</keyword>
<keyword id="KW-0055">Arginine biosynthesis</keyword>
<keyword id="KW-0067">ATP-binding</keyword>
<keyword id="KW-0963">Cytoplasm</keyword>
<keyword id="KW-0436">Ligase</keyword>
<keyword id="KW-0547">Nucleotide-binding</keyword>
<keyword id="KW-1185">Reference proteome</keyword>
<organism>
    <name type="scientific">Maricaulis maris (strain MCS10)</name>
    <name type="common">Caulobacter maris</name>
    <dbReference type="NCBI Taxonomy" id="394221"/>
    <lineage>
        <taxon>Bacteria</taxon>
        <taxon>Pseudomonadati</taxon>
        <taxon>Pseudomonadota</taxon>
        <taxon>Alphaproteobacteria</taxon>
        <taxon>Maricaulales</taxon>
        <taxon>Maricaulaceae</taxon>
        <taxon>Maricaulis</taxon>
    </lineage>
</organism>
<evidence type="ECO:0000255" key="1">
    <source>
        <dbReference type="HAMAP-Rule" id="MF_00005"/>
    </source>
</evidence>
<gene>
    <name evidence="1" type="primary">argG</name>
    <name type="ordered locus">Mmar10_2916</name>
</gene>
<dbReference type="EC" id="6.3.4.5" evidence="1"/>
<dbReference type="EMBL" id="CP000449">
    <property type="protein sequence ID" value="ABI67197.1"/>
    <property type="molecule type" value="Genomic_DNA"/>
</dbReference>
<dbReference type="RefSeq" id="WP_011644841.1">
    <property type="nucleotide sequence ID" value="NC_008347.1"/>
</dbReference>
<dbReference type="SMR" id="Q0AKJ6"/>
<dbReference type="STRING" id="394221.Mmar10_2916"/>
<dbReference type="KEGG" id="mmr:Mmar10_2916"/>
<dbReference type="eggNOG" id="COG0137">
    <property type="taxonomic scope" value="Bacteria"/>
</dbReference>
<dbReference type="HOGENOM" id="CLU_032784_4_2_5"/>
<dbReference type="OrthoDB" id="9801641at2"/>
<dbReference type="UniPathway" id="UPA00068">
    <property type="reaction ID" value="UER00113"/>
</dbReference>
<dbReference type="Proteomes" id="UP000001964">
    <property type="component" value="Chromosome"/>
</dbReference>
<dbReference type="GO" id="GO:0005737">
    <property type="term" value="C:cytoplasm"/>
    <property type="evidence" value="ECO:0007669"/>
    <property type="project" value="UniProtKB-SubCell"/>
</dbReference>
<dbReference type="GO" id="GO:0004055">
    <property type="term" value="F:argininosuccinate synthase activity"/>
    <property type="evidence" value="ECO:0007669"/>
    <property type="project" value="UniProtKB-UniRule"/>
</dbReference>
<dbReference type="GO" id="GO:0005524">
    <property type="term" value="F:ATP binding"/>
    <property type="evidence" value="ECO:0007669"/>
    <property type="project" value="UniProtKB-UniRule"/>
</dbReference>
<dbReference type="GO" id="GO:0000053">
    <property type="term" value="P:argininosuccinate metabolic process"/>
    <property type="evidence" value="ECO:0007669"/>
    <property type="project" value="TreeGrafter"/>
</dbReference>
<dbReference type="GO" id="GO:0006526">
    <property type="term" value="P:L-arginine biosynthetic process"/>
    <property type="evidence" value="ECO:0007669"/>
    <property type="project" value="UniProtKB-UniRule"/>
</dbReference>
<dbReference type="GO" id="GO:0000050">
    <property type="term" value="P:urea cycle"/>
    <property type="evidence" value="ECO:0007669"/>
    <property type="project" value="TreeGrafter"/>
</dbReference>
<dbReference type="CDD" id="cd01999">
    <property type="entry name" value="ASS"/>
    <property type="match status" value="1"/>
</dbReference>
<dbReference type="FunFam" id="3.40.50.620:FF:000019">
    <property type="entry name" value="Argininosuccinate synthase"/>
    <property type="match status" value="1"/>
</dbReference>
<dbReference type="FunFam" id="3.90.1260.10:FF:000007">
    <property type="entry name" value="Argininosuccinate synthase"/>
    <property type="match status" value="1"/>
</dbReference>
<dbReference type="Gene3D" id="3.90.1260.10">
    <property type="entry name" value="Argininosuccinate synthetase, chain A, domain 2"/>
    <property type="match status" value="1"/>
</dbReference>
<dbReference type="Gene3D" id="3.40.50.620">
    <property type="entry name" value="HUPs"/>
    <property type="match status" value="1"/>
</dbReference>
<dbReference type="Gene3D" id="1.20.5.470">
    <property type="entry name" value="Single helix bin"/>
    <property type="match status" value="1"/>
</dbReference>
<dbReference type="HAMAP" id="MF_00005">
    <property type="entry name" value="Arg_succ_synth_type1"/>
    <property type="match status" value="1"/>
</dbReference>
<dbReference type="InterPro" id="IPR048268">
    <property type="entry name" value="Arginosuc_syn_C"/>
</dbReference>
<dbReference type="InterPro" id="IPR048267">
    <property type="entry name" value="Arginosuc_syn_N"/>
</dbReference>
<dbReference type="InterPro" id="IPR001518">
    <property type="entry name" value="Arginosuc_synth"/>
</dbReference>
<dbReference type="InterPro" id="IPR018223">
    <property type="entry name" value="Arginosuc_synth_CS"/>
</dbReference>
<dbReference type="InterPro" id="IPR023434">
    <property type="entry name" value="Arginosuc_synth_type_1_subfam"/>
</dbReference>
<dbReference type="InterPro" id="IPR024074">
    <property type="entry name" value="AS_cat/multimer_dom_body"/>
</dbReference>
<dbReference type="InterPro" id="IPR014729">
    <property type="entry name" value="Rossmann-like_a/b/a_fold"/>
</dbReference>
<dbReference type="NCBIfam" id="TIGR00032">
    <property type="entry name" value="argG"/>
    <property type="match status" value="1"/>
</dbReference>
<dbReference type="NCBIfam" id="NF001770">
    <property type="entry name" value="PRK00509.1"/>
    <property type="match status" value="1"/>
</dbReference>
<dbReference type="PANTHER" id="PTHR11587">
    <property type="entry name" value="ARGININOSUCCINATE SYNTHASE"/>
    <property type="match status" value="1"/>
</dbReference>
<dbReference type="PANTHER" id="PTHR11587:SF2">
    <property type="entry name" value="ARGININOSUCCINATE SYNTHASE"/>
    <property type="match status" value="1"/>
</dbReference>
<dbReference type="Pfam" id="PF20979">
    <property type="entry name" value="Arginosuc_syn_C"/>
    <property type="match status" value="1"/>
</dbReference>
<dbReference type="Pfam" id="PF00764">
    <property type="entry name" value="Arginosuc_synth"/>
    <property type="match status" value="1"/>
</dbReference>
<dbReference type="SUPFAM" id="SSF52402">
    <property type="entry name" value="Adenine nucleotide alpha hydrolases-like"/>
    <property type="match status" value="1"/>
</dbReference>
<dbReference type="SUPFAM" id="SSF69864">
    <property type="entry name" value="Argininosuccinate synthetase, C-terminal domain"/>
    <property type="match status" value="1"/>
</dbReference>
<dbReference type="PROSITE" id="PS00564">
    <property type="entry name" value="ARGININOSUCCIN_SYN_1"/>
    <property type="match status" value="1"/>
</dbReference>
<dbReference type="PROSITE" id="PS00565">
    <property type="entry name" value="ARGININOSUCCIN_SYN_2"/>
    <property type="match status" value="1"/>
</dbReference>
<name>ASSY_MARMM</name>